<gene>
    <name evidence="1" type="primary">rpoD</name>
    <name type="ordered locus">RP858</name>
</gene>
<comment type="function">
    <text evidence="1">Sigma factors are initiation factors that promote the attachment of RNA polymerase to specific initiation sites and are then released. This sigma factor is the primary sigma factor during exponential growth.</text>
</comment>
<comment type="subunit">
    <text evidence="1">Interacts transiently with the RNA polymerase catalytic core.</text>
</comment>
<comment type="subcellular location">
    <subcellularLocation>
        <location evidence="1">Cytoplasm</location>
    </subcellularLocation>
</comment>
<comment type="similarity">
    <text evidence="1">Belongs to the sigma-70 factor family. RpoD/SigA subfamily.</text>
</comment>
<dbReference type="EMBL" id="U02878">
    <property type="protein sequence ID" value="AAB81404.1"/>
    <property type="molecule type" value="Unassigned_DNA"/>
</dbReference>
<dbReference type="EMBL" id="AJ235273">
    <property type="protein sequence ID" value="CAA15282.1"/>
    <property type="molecule type" value="Genomic_DNA"/>
</dbReference>
<dbReference type="PIR" id="JC1379">
    <property type="entry name" value="RNRE7P"/>
</dbReference>
<dbReference type="RefSeq" id="NP_221206.1">
    <property type="nucleotide sequence ID" value="NC_000963.1"/>
</dbReference>
<dbReference type="RefSeq" id="WP_004596762.1">
    <property type="nucleotide sequence ID" value="NC_000963.1"/>
</dbReference>
<dbReference type="SMR" id="P33451"/>
<dbReference type="STRING" id="272947.gene:17555927"/>
<dbReference type="EnsemblBacteria" id="CAA15282">
    <property type="protein sequence ID" value="CAA15282"/>
    <property type="gene ID" value="CAA15282"/>
</dbReference>
<dbReference type="GeneID" id="57569981"/>
<dbReference type="KEGG" id="rpr:RP858"/>
<dbReference type="PATRIC" id="fig|272947.5.peg.897"/>
<dbReference type="eggNOG" id="COG0568">
    <property type="taxonomic scope" value="Bacteria"/>
</dbReference>
<dbReference type="HOGENOM" id="CLU_014793_7_2_5"/>
<dbReference type="OrthoDB" id="9809557at2"/>
<dbReference type="Proteomes" id="UP000002480">
    <property type="component" value="Chromosome"/>
</dbReference>
<dbReference type="GO" id="GO:0005737">
    <property type="term" value="C:cytoplasm"/>
    <property type="evidence" value="ECO:0007669"/>
    <property type="project" value="UniProtKB-SubCell"/>
</dbReference>
<dbReference type="GO" id="GO:0003677">
    <property type="term" value="F:DNA binding"/>
    <property type="evidence" value="ECO:0007669"/>
    <property type="project" value="UniProtKB-UniRule"/>
</dbReference>
<dbReference type="GO" id="GO:0016987">
    <property type="term" value="F:sigma factor activity"/>
    <property type="evidence" value="ECO:0007669"/>
    <property type="project" value="UniProtKB-UniRule"/>
</dbReference>
<dbReference type="GO" id="GO:0006352">
    <property type="term" value="P:DNA-templated transcription initiation"/>
    <property type="evidence" value="ECO:0007669"/>
    <property type="project" value="UniProtKB-UniRule"/>
</dbReference>
<dbReference type="CDD" id="cd06171">
    <property type="entry name" value="Sigma70_r4"/>
    <property type="match status" value="1"/>
</dbReference>
<dbReference type="FunFam" id="1.10.601.10:FF:000001">
    <property type="entry name" value="RNA polymerase sigma factor SigA"/>
    <property type="match status" value="1"/>
</dbReference>
<dbReference type="Gene3D" id="1.10.601.10">
    <property type="entry name" value="RNA Polymerase Primary Sigma Factor"/>
    <property type="match status" value="1"/>
</dbReference>
<dbReference type="Gene3D" id="1.10.220.120">
    <property type="entry name" value="Sigma-70 factor, region 1.1"/>
    <property type="match status" value="1"/>
</dbReference>
<dbReference type="Gene3D" id="1.10.10.10">
    <property type="entry name" value="Winged helix-like DNA-binding domain superfamily/Winged helix DNA-binding domain"/>
    <property type="match status" value="2"/>
</dbReference>
<dbReference type="HAMAP" id="MF_00963">
    <property type="entry name" value="Sigma70_RpoD_SigA"/>
    <property type="match status" value="1"/>
</dbReference>
<dbReference type="InterPro" id="IPR014284">
    <property type="entry name" value="RNA_pol_sigma-70_dom"/>
</dbReference>
<dbReference type="InterPro" id="IPR000943">
    <property type="entry name" value="RNA_pol_sigma70"/>
</dbReference>
<dbReference type="InterPro" id="IPR009042">
    <property type="entry name" value="RNA_pol_sigma70_r1_2"/>
</dbReference>
<dbReference type="InterPro" id="IPR007627">
    <property type="entry name" value="RNA_pol_sigma70_r2"/>
</dbReference>
<dbReference type="InterPro" id="IPR007624">
    <property type="entry name" value="RNA_pol_sigma70_r3"/>
</dbReference>
<dbReference type="InterPro" id="IPR007630">
    <property type="entry name" value="RNA_pol_sigma70_r4"/>
</dbReference>
<dbReference type="InterPro" id="IPR007631">
    <property type="entry name" value="RNA_pol_sigma_70_non-ess"/>
</dbReference>
<dbReference type="InterPro" id="IPR007127">
    <property type="entry name" value="RNA_pol_sigma_70_r1_1"/>
</dbReference>
<dbReference type="InterPro" id="IPR042189">
    <property type="entry name" value="RNA_pol_sigma_70_r1_1_sf"/>
</dbReference>
<dbReference type="InterPro" id="IPR013325">
    <property type="entry name" value="RNA_pol_sigma_r2"/>
</dbReference>
<dbReference type="InterPro" id="IPR013324">
    <property type="entry name" value="RNA_pol_sigma_r3/r4-like"/>
</dbReference>
<dbReference type="InterPro" id="IPR012760">
    <property type="entry name" value="RNA_pol_sigma_RpoD_C"/>
</dbReference>
<dbReference type="InterPro" id="IPR050239">
    <property type="entry name" value="Sigma-70_RNA_pol_init_factors"/>
</dbReference>
<dbReference type="InterPro" id="IPR028630">
    <property type="entry name" value="Sigma70_RpoD"/>
</dbReference>
<dbReference type="InterPro" id="IPR036388">
    <property type="entry name" value="WH-like_DNA-bd_sf"/>
</dbReference>
<dbReference type="NCBIfam" id="NF004208">
    <property type="entry name" value="PRK05658.1"/>
    <property type="match status" value="1"/>
</dbReference>
<dbReference type="NCBIfam" id="TIGR02393">
    <property type="entry name" value="RpoD_Cterm"/>
    <property type="match status" value="1"/>
</dbReference>
<dbReference type="NCBIfam" id="TIGR02937">
    <property type="entry name" value="sigma70-ECF"/>
    <property type="match status" value="1"/>
</dbReference>
<dbReference type="PANTHER" id="PTHR30603">
    <property type="entry name" value="RNA POLYMERASE SIGMA FACTOR RPO"/>
    <property type="match status" value="1"/>
</dbReference>
<dbReference type="PANTHER" id="PTHR30603:SF60">
    <property type="entry name" value="RNA POLYMERASE SIGMA FACTOR RPOD"/>
    <property type="match status" value="1"/>
</dbReference>
<dbReference type="Pfam" id="PF04546">
    <property type="entry name" value="Sigma70_ner"/>
    <property type="match status" value="1"/>
</dbReference>
<dbReference type="Pfam" id="PF03979">
    <property type="entry name" value="Sigma70_r1_1"/>
    <property type="match status" value="1"/>
</dbReference>
<dbReference type="Pfam" id="PF00140">
    <property type="entry name" value="Sigma70_r1_2"/>
    <property type="match status" value="1"/>
</dbReference>
<dbReference type="Pfam" id="PF04542">
    <property type="entry name" value="Sigma70_r2"/>
    <property type="match status" value="1"/>
</dbReference>
<dbReference type="Pfam" id="PF04539">
    <property type="entry name" value="Sigma70_r3"/>
    <property type="match status" value="1"/>
</dbReference>
<dbReference type="Pfam" id="PF04545">
    <property type="entry name" value="Sigma70_r4"/>
    <property type="match status" value="1"/>
</dbReference>
<dbReference type="PRINTS" id="PR00046">
    <property type="entry name" value="SIGMA70FCT"/>
</dbReference>
<dbReference type="SUPFAM" id="SSF88946">
    <property type="entry name" value="Sigma2 domain of RNA polymerase sigma factors"/>
    <property type="match status" value="1"/>
</dbReference>
<dbReference type="SUPFAM" id="SSF88659">
    <property type="entry name" value="Sigma3 and sigma4 domains of RNA polymerase sigma factors"/>
    <property type="match status" value="2"/>
</dbReference>
<dbReference type="PROSITE" id="PS00715">
    <property type="entry name" value="SIGMA70_1"/>
    <property type="match status" value="1"/>
</dbReference>
<dbReference type="PROSITE" id="PS00716">
    <property type="entry name" value="SIGMA70_2"/>
    <property type="match status" value="1"/>
</dbReference>
<organism>
    <name type="scientific">Rickettsia prowazekii (strain Madrid E)</name>
    <dbReference type="NCBI Taxonomy" id="272947"/>
    <lineage>
        <taxon>Bacteria</taxon>
        <taxon>Pseudomonadati</taxon>
        <taxon>Pseudomonadota</taxon>
        <taxon>Alphaproteobacteria</taxon>
        <taxon>Rickettsiales</taxon>
        <taxon>Rickettsiaceae</taxon>
        <taxon>Rickettsieae</taxon>
        <taxon>Rickettsia</taxon>
        <taxon>typhus group</taxon>
    </lineage>
</organism>
<proteinExistence type="inferred from homology"/>
<accession>P33451</accession>
<name>RPOD_RICPR</name>
<keyword id="KW-0963">Cytoplasm</keyword>
<keyword id="KW-0238">DNA-binding</keyword>
<keyword id="KW-1185">Reference proteome</keyword>
<keyword id="KW-0731">Sigma factor</keyword>
<keyword id="KW-0804">Transcription</keyword>
<keyword id="KW-0805">Transcription regulation</keyword>
<sequence length="635" mass="73080">MSNSNIDNDPAKIDSLLKKAKSKKIPVTYDDINKALPLNKNPSIRQLEEAILKFSDAGVDILESNEDDEIKLDIGMDEEFKLSTNVDNESEDEVEEENIGSTDDPVRLYLKDMGGVDLLTRENEVEIAKRIEEGRKTMTASLCRSPIAMRCFIVWYEDLVNEKMLLRDLIDLEANMLHDEVHENDEEHNSETEVEEHEDNHLSMSRVETQILHNIIDRMKKISFICEELLIEAKKCYEESFEPKVLQNSKKYNNNLELLINEVSEIHFNSKRTEEILGKMYGINRDLINKETAFLKLAEKYGVTRQNFLDEYIGSVINAAWKEKMLKNKKVAWKELITKESDYIDQMINELSVIESNTGLLVNDFKKLVNTIQKSERQTLQAKKDMIEANLRLVISIAKKYANRGLQFLDLIQEGNIGLMKAVDKFEYRRGYKFSTYATWWIRQAITRAIADQARTIRIPVHMIETINKILRTSRQMLNELGYEPTATEIANRLSMPLDKVRKVMKIAKEPISLENPVGDDSDGGQLGDFIEDKNAVAPIDAAIQSNLREVTTRVLATLTPREERVLRMRFGIGMNTDHTLEEVGQQFKVTRERIRQIESKALRKLQHPIRSKKLNSFRNGGKRGDGNPSDLLEA</sequence>
<protein>
    <recommendedName>
        <fullName evidence="1">RNA polymerase sigma factor RpoD</fullName>
    </recommendedName>
    <alternativeName>
        <fullName evidence="1">Sigma-70</fullName>
    </alternativeName>
</protein>
<reference key="1">
    <citation type="journal article" date="1992" name="Gene">
        <title>Isolation and characterization of the gene coding for the major sigma factor of Rickettsia prowazekii DNA-dependent RNA polymerase.</title>
        <authorList>
            <person name="Marks G.L."/>
            <person name="Winkler H.H."/>
            <person name="Wood D.O."/>
        </authorList>
    </citation>
    <scope>NUCLEOTIDE SEQUENCE [GENOMIC DNA]</scope>
    <source>
        <strain>Madrid E</strain>
    </source>
</reference>
<reference key="2">
    <citation type="journal article" date="1998" name="Nature">
        <title>The genome sequence of Rickettsia prowazekii and the origin of mitochondria.</title>
        <authorList>
            <person name="Andersson S.G.E."/>
            <person name="Zomorodipour A."/>
            <person name="Andersson J.O."/>
            <person name="Sicheritz-Ponten T."/>
            <person name="Alsmark U.C.M."/>
            <person name="Podowski R.M."/>
            <person name="Naeslund A.K."/>
            <person name="Eriksson A.-S."/>
            <person name="Winkler H.H."/>
            <person name="Kurland C.G."/>
        </authorList>
    </citation>
    <scope>NUCLEOTIDE SEQUENCE [LARGE SCALE GENOMIC DNA]</scope>
    <source>
        <strain>Madrid E</strain>
    </source>
</reference>
<feature type="chain" id="PRO_0000093911" description="RNA polymerase sigma factor RpoD">
    <location>
        <begin position="1"/>
        <end position="635"/>
    </location>
</feature>
<feature type="DNA-binding region" description="H-T-H motif" evidence="1">
    <location>
        <begin position="581"/>
        <end position="600"/>
    </location>
</feature>
<feature type="region of interest" description="Disordered" evidence="2">
    <location>
        <begin position="182"/>
        <end position="202"/>
    </location>
</feature>
<feature type="region of interest" description="Sigma-70 factor domain-2" evidence="1">
    <location>
        <begin position="386"/>
        <end position="456"/>
    </location>
</feature>
<feature type="region of interest" description="Sigma-70 factor domain-3" evidence="1">
    <location>
        <begin position="465"/>
        <end position="542"/>
    </location>
</feature>
<feature type="region of interest" description="Sigma-70 factor domain-4" evidence="1">
    <location>
        <begin position="555"/>
        <end position="608"/>
    </location>
</feature>
<feature type="region of interest" description="Disordered" evidence="2">
    <location>
        <begin position="610"/>
        <end position="635"/>
    </location>
</feature>
<feature type="short sequence motif" description="Interaction with polymerase core subunit RpoC">
    <location>
        <begin position="410"/>
        <end position="413"/>
    </location>
</feature>
<feature type="compositionally biased region" description="Basic and acidic residues" evidence="2">
    <location>
        <begin position="182"/>
        <end position="191"/>
    </location>
</feature>
<evidence type="ECO:0000255" key="1">
    <source>
        <dbReference type="HAMAP-Rule" id="MF_00963"/>
    </source>
</evidence>
<evidence type="ECO:0000256" key="2">
    <source>
        <dbReference type="SAM" id="MobiDB-lite"/>
    </source>
</evidence>